<evidence type="ECO:0000255" key="1">
    <source>
        <dbReference type="HAMAP-Rule" id="MF_01321"/>
    </source>
</evidence>
<protein>
    <recommendedName>
        <fullName evidence="1">DNA-directed RNA polymerase subunit beta</fullName>
        <shortName evidence="1">RNAP subunit beta</shortName>
        <ecNumber evidence="1">2.7.7.6</ecNumber>
    </recommendedName>
    <alternativeName>
        <fullName evidence="1">RNA polymerase subunit beta</fullName>
    </alternativeName>
    <alternativeName>
        <fullName evidence="1">Transcriptase subunit beta</fullName>
    </alternativeName>
</protein>
<feature type="chain" id="PRO_1000141744" description="DNA-directed RNA polymerase subunit beta">
    <location>
        <begin position="1"/>
        <end position="1188"/>
    </location>
</feature>
<keyword id="KW-0240">DNA-directed RNA polymerase</keyword>
<keyword id="KW-0548">Nucleotidyltransferase</keyword>
<keyword id="KW-0804">Transcription</keyword>
<keyword id="KW-0808">Transferase</keyword>
<comment type="function">
    <text evidence="1">DNA-dependent RNA polymerase catalyzes the transcription of DNA into RNA using the four ribonucleoside triphosphates as substrates.</text>
</comment>
<comment type="catalytic activity">
    <reaction evidence="1">
        <text>RNA(n) + a ribonucleoside 5'-triphosphate = RNA(n+1) + diphosphate</text>
        <dbReference type="Rhea" id="RHEA:21248"/>
        <dbReference type="Rhea" id="RHEA-COMP:14527"/>
        <dbReference type="Rhea" id="RHEA-COMP:17342"/>
        <dbReference type="ChEBI" id="CHEBI:33019"/>
        <dbReference type="ChEBI" id="CHEBI:61557"/>
        <dbReference type="ChEBI" id="CHEBI:140395"/>
        <dbReference type="EC" id="2.7.7.6"/>
    </reaction>
</comment>
<comment type="subunit">
    <text evidence="1">The RNAP catalytic core consists of 2 alpha, 1 beta, 1 beta' and 1 omega subunit. When a sigma factor is associated with the core the holoenzyme is formed, which can initiate transcription.</text>
</comment>
<comment type="similarity">
    <text evidence="1">Belongs to the RNA polymerase beta chain family.</text>
</comment>
<proteinExistence type="inferred from homology"/>
<reference key="1">
    <citation type="journal article" date="2008" name="J. Bacteriol.">
        <title>Genome sequence of a nephritogenic and highly transformable M49 strain of Streptococcus pyogenes.</title>
        <authorList>
            <person name="McShan W.M."/>
            <person name="Ferretti J.J."/>
            <person name="Karasawa T."/>
            <person name="Suvorov A.N."/>
            <person name="Lin S."/>
            <person name="Qin B."/>
            <person name="Jia H."/>
            <person name="Kenton S."/>
            <person name="Najar F."/>
            <person name="Wu H."/>
            <person name="Scott J."/>
            <person name="Roe B.A."/>
            <person name="Savic D.J."/>
        </authorList>
    </citation>
    <scope>NUCLEOTIDE SEQUENCE [LARGE SCALE GENOMIC DNA]</scope>
    <source>
        <strain>NZ131</strain>
    </source>
</reference>
<accession>B5XJ72</accession>
<name>RPOB_STRPZ</name>
<organism>
    <name type="scientific">Streptococcus pyogenes serotype M49 (strain NZ131)</name>
    <dbReference type="NCBI Taxonomy" id="471876"/>
    <lineage>
        <taxon>Bacteria</taxon>
        <taxon>Bacillati</taxon>
        <taxon>Bacillota</taxon>
        <taxon>Bacilli</taxon>
        <taxon>Lactobacillales</taxon>
        <taxon>Streptococcaceae</taxon>
        <taxon>Streptococcus</taxon>
    </lineage>
</organism>
<sequence length="1188" mass="132855">MAGHEVRYGKHRTRRSFSRIKEVLDLPNLIEIQTDSFQDFLDSGLKEVFEDVLPISNFTDTMELEFVGYEFKEPKYTLEEARIHDASYSAPIFVTFRLVNKETGEIKTQEVFFGDFPIMTEMGTFIINGGERIIVSQLVRSPGVYFNDKVDKNGKVGYGSTVIPNRGAWLELETDSKDIAYTRIDRTRKIPFTTLVRALGFSGDDEIVDIFGESDLVRNTIEKDIHKNPSDSRTDEALKEIYERLRPGEPKTADSSRSLLIARFFDARRYDLAAVGRYKVNKKLNIKTRLLNQIIAENLVDAETGEILVEAGTEMTRSVIESIEEHLDGDLNKFVYTPNDYAVVTEPVVLQKFKVVSPIDPDRVVTIVGNANPDDKVRALTPADILAEMSYFLNLAEGLGKVDDIDHLGNRRIRAVGELLANQFRIGLARMERNVRERMSVQDNDVLTPQQIINIRPVTAAVKEFFGSSQLSQFMDQHNPLSELSHKRRLSALGPGGLTRDRAGYEVRDVHYTHYGRMCPIETPEGPNIGLINNLSSFGHLNKYGFIQTPYRKVDRATGRVTNEIVWLTADEEDEYTVAQANSKLNEDGTFAEEIVMGRHQGNNQEFSASVVDFVDVSPKQVVAVATACIPFLENDDSNRALMGANMQRQAVPLIDPKAPYVGTGMEYQAAHDSGAAVIAQHNGKVVFSDAEKVEIRRQDGSLDVYHITKFRRSNSGTAYNQRTLVKVGDIVEKGDFIADGPSMENGEMALGQNPVVAYMTWEGYNFEDAVIMSERLVKEDVYTSVHLEEFESETRDTKLGPEEITREIPNVGEEALKDLDEMGIIRIGAEVKEGDILVGKVTPKGEKDLSAEERLLHAIFGDKSREVRDTSLRVPHGGDGIVRDVKIFTRANGDELQSGVNMLVRVYIAQKRKIKVGDKMAGRHGNKGVVSRIVPVEDMPYLPDGTPVDIMLNPLGVPSRMNIGQVMELHLGMAARNLGIHIATPVFDGASSEDLWDTVREAGMDSDAKTVLYDGRTGEPFDNRVSVGVMYMIKLHHMVDDKLHARSVGPYSLVTQQPLGGKAQFGGQRFGEMEVWALEAYGASNVLQEILTYKSDDVTGRLKAYEAITKGKPIPKPGVPESFRVLVKELQSLGLDMRVLDEDDNEVELRDLDEGEDDDIMHVDDLEKAREKQAQETQEVSETTDEK</sequence>
<gene>
    <name evidence="1" type="primary">rpoB</name>
    <name type="ordered locus">Spy49_0087</name>
</gene>
<dbReference type="EC" id="2.7.7.6" evidence="1"/>
<dbReference type="EMBL" id="CP000829">
    <property type="protein sequence ID" value="ACI60440.1"/>
    <property type="molecule type" value="Genomic_DNA"/>
</dbReference>
<dbReference type="SMR" id="B5XJ72"/>
<dbReference type="KEGG" id="soz:Spy49_0087"/>
<dbReference type="HOGENOM" id="CLU_000524_4_1_9"/>
<dbReference type="Proteomes" id="UP000001039">
    <property type="component" value="Chromosome"/>
</dbReference>
<dbReference type="GO" id="GO:0000428">
    <property type="term" value="C:DNA-directed RNA polymerase complex"/>
    <property type="evidence" value="ECO:0007669"/>
    <property type="project" value="UniProtKB-KW"/>
</dbReference>
<dbReference type="GO" id="GO:0003677">
    <property type="term" value="F:DNA binding"/>
    <property type="evidence" value="ECO:0007669"/>
    <property type="project" value="UniProtKB-UniRule"/>
</dbReference>
<dbReference type="GO" id="GO:0003899">
    <property type="term" value="F:DNA-directed RNA polymerase activity"/>
    <property type="evidence" value="ECO:0007669"/>
    <property type="project" value="UniProtKB-UniRule"/>
</dbReference>
<dbReference type="GO" id="GO:0032549">
    <property type="term" value="F:ribonucleoside binding"/>
    <property type="evidence" value="ECO:0007669"/>
    <property type="project" value="InterPro"/>
</dbReference>
<dbReference type="GO" id="GO:0006351">
    <property type="term" value="P:DNA-templated transcription"/>
    <property type="evidence" value="ECO:0007669"/>
    <property type="project" value="UniProtKB-UniRule"/>
</dbReference>
<dbReference type="CDD" id="cd00653">
    <property type="entry name" value="RNA_pol_B_RPB2"/>
    <property type="match status" value="1"/>
</dbReference>
<dbReference type="Gene3D" id="2.40.50.100">
    <property type="match status" value="1"/>
</dbReference>
<dbReference type="Gene3D" id="2.40.50.150">
    <property type="match status" value="1"/>
</dbReference>
<dbReference type="Gene3D" id="3.90.1100.10">
    <property type="match status" value="2"/>
</dbReference>
<dbReference type="Gene3D" id="2.30.150.10">
    <property type="entry name" value="DNA-directed RNA polymerase, beta subunit, external 1 domain"/>
    <property type="match status" value="1"/>
</dbReference>
<dbReference type="Gene3D" id="2.40.270.10">
    <property type="entry name" value="DNA-directed RNA polymerase, subunit 2, domain 6"/>
    <property type="match status" value="1"/>
</dbReference>
<dbReference type="Gene3D" id="3.90.1800.10">
    <property type="entry name" value="RNA polymerase alpha subunit dimerisation domain"/>
    <property type="match status" value="1"/>
</dbReference>
<dbReference type="Gene3D" id="3.90.1110.10">
    <property type="entry name" value="RNA polymerase Rpb2, domain 2"/>
    <property type="match status" value="1"/>
</dbReference>
<dbReference type="HAMAP" id="MF_01321">
    <property type="entry name" value="RNApol_bact_RpoB"/>
    <property type="match status" value="1"/>
</dbReference>
<dbReference type="InterPro" id="IPR042107">
    <property type="entry name" value="DNA-dir_RNA_pol_bsu_ext_1_sf"/>
</dbReference>
<dbReference type="InterPro" id="IPR019462">
    <property type="entry name" value="DNA-dir_RNA_pol_bsu_external_1"/>
</dbReference>
<dbReference type="InterPro" id="IPR015712">
    <property type="entry name" value="DNA-dir_RNA_pol_su2"/>
</dbReference>
<dbReference type="InterPro" id="IPR007120">
    <property type="entry name" value="DNA-dir_RNAP_su2_dom"/>
</dbReference>
<dbReference type="InterPro" id="IPR037033">
    <property type="entry name" value="DNA-dir_RNAP_su2_hyb_sf"/>
</dbReference>
<dbReference type="InterPro" id="IPR010243">
    <property type="entry name" value="RNA_pol_bsu_bac"/>
</dbReference>
<dbReference type="InterPro" id="IPR007121">
    <property type="entry name" value="RNA_pol_bsu_CS"/>
</dbReference>
<dbReference type="InterPro" id="IPR007644">
    <property type="entry name" value="RNA_pol_bsu_protrusion"/>
</dbReference>
<dbReference type="InterPro" id="IPR007642">
    <property type="entry name" value="RNA_pol_Rpb2_2"/>
</dbReference>
<dbReference type="InterPro" id="IPR037034">
    <property type="entry name" value="RNA_pol_Rpb2_2_sf"/>
</dbReference>
<dbReference type="InterPro" id="IPR007645">
    <property type="entry name" value="RNA_pol_Rpb2_3"/>
</dbReference>
<dbReference type="InterPro" id="IPR007641">
    <property type="entry name" value="RNA_pol_Rpb2_7"/>
</dbReference>
<dbReference type="InterPro" id="IPR014724">
    <property type="entry name" value="RNA_pol_RPB2_OB-fold"/>
</dbReference>
<dbReference type="NCBIfam" id="NF001616">
    <property type="entry name" value="PRK00405.1"/>
    <property type="match status" value="1"/>
</dbReference>
<dbReference type="NCBIfam" id="TIGR02013">
    <property type="entry name" value="rpoB"/>
    <property type="match status" value="1"/>
</dbReference>
<dbReference type="PANTHER" id="PTHR20856">
    <property type="entry name" value="DNA-DIRECTED RNA POLYMERASE I SUBUNIT 2"/>
    <property type="match status" value="1"/>
</dbReference>
<dbReference type="Pfam" id="PF04563">
    <property type="entry name" value="RNA_pol_Rpb2_1"/>
    <property type="match status" value="1"/>
</dbReference>
<dbReference type="Pfam" id="PF04561">
    <property type="entry name" value="RNA_pol_Rpb2_2"/>
    <property type="match status" value="2"/>
</dbReference>
<dbReference type="Pfam" id="PF04565">
    <property type="entry name" value="RNA_pol_Rpb2_3"/>
    <property type="match status" value="1"/>
</dbReference>
<dbReference type="Pfam" id="PF10385">
    <property type="entry name" value="RNA_pol_Rpb2_45"/>
    <property type="match status" value="1"/>
</dbReference>
<dbReference type="Pfam" id="PF00562">
    <property type="entry name" value="RNA_pol_Rpb2_6"/>
    <property type="match status" value="1"/>
</dbReference>
<dbReference type="Pfam" id="PF04560">
    <property type="entry name" value="RNA_pol_Rpb2_7"/>
    <property type="match status" value="1"/>
</dbReference>
<dbReference type="SUPFAM" id="SSF64484">
    <property type="entry name" value="beta and beta-prime subunits of DNA dependent RNA-polymerase"/>
    <property type="match status" value="1"/>
</dbReference>
<dbReference type="PROSITE" id="PS01166">
    <property type="entry name" value="RNA_POL_BETA"/>
    <property type="match status" value="1"/>
</dbReference>